<dbReference type="EMBL" id="X59720">
    <property type="protein sequence ID" value="CAA42297.1"/>
    <property type="molecule type" value="Genomic_DNA"/>
</dbReference>
<dbReference type="PIR" id="S19462">
    <property type="entry name" value="S19462"/>
</dbReference>
<dbReference type="SMR" id="P25629"/>
<dbReference type="PaxDb" id="4932-YCR049C"/>
<dbReference type="EnsemblFungi" id="YCR049C_mRNA">
    <property type="protein sequence ID" value="YCR049C"/>
    <property type="gene ID" value="YCR049C"/>
</dbReference>
<dbReference type="AGR" id="SGD:S000000645"/>
<dbReference type="SGD" id="S000000645">
    <property type="gene designation" value="YCR049C"/>
</dbReference>
<dbReference type="HOGENOM" id="CLU_1817309_0_0_1"/>
<comment type="miscellaneous">
    <text evidence="2">Almost completely overlaps ARE1.</text>
</comment>
<comment type="caution">
    <text evidence="3">Product of a dubious gene prediction unlikely to encode a functional protein. Because of that it is not part of the S.cerevisiae S288c complete/reference proteome set.</text>
</comment>
<name>YCT9_YEAST</name>
<evidence type="ECO:0000256" key="1">
    <source>
        <dbReference type="SAM" id="MobiDB-lite"/>
    </source>
</evidence>
<evidence type="ECO:0000305" key="2"/>
<evidence type="ECO:0000305" key="3">
    <source>
    </source>
</evidence>
<accession>P25629</accession>
<feature type="chain" id="PRO_0000202570" description="Putative uncharacterized protein YCR049C">
    <location>
        <begin position="1"/>
        <end position="148"/>
    </location>
</feature>
<feature type="region of interest" description="Disordered" evidence="1">
    <location>
        <begin position="65"/>
        <end position="85"/>
    </location>
</feature>
<feature type="compositionally biased region" description="Low complexity" evidence="1">
    <location>
        <begin position="65"/>
        <end position="79"/>
    </location>
</feature>
<protein>
    <recommendedName>
        <fullName>Putative uncharacterized protein YCR049C</fullName>
    </recommendedName>
</protein>
<sequence>MALSRSVGRGSKLTSPKNDTYLLASFRWNLDRDLLFRCERYFCMWASTGYSSSCSCFPATRSASVDSTPSVDSTGSTSDVVDDRGETSMDSCGRITLSYVTECRLLASAELSLRILRNSSSCNKSLVSVILAICFGALAASRAEQPPA</sequence>
<reference key="1">
    <citation type="journal article" date="1992" name="Nature">
        <title>The complete DNA sequence of yeast chromosome III.</title>
        <authorList>
            <person name="Oliver S.G."/>
            <person name="van der Aart Q.J.M."/>
            <person name="Agostoni-Carbone M.L."/>
            <person name="Aigle M."/>
            <person name="Alberghina L."/>
            <person name="Alexandraki D."/>
            <person name="Antoine G."/>
            <person name="Anwar R."/>
            <person name="Ballesta J.P.G."/>
            <person name="Benit P."/>
            <person name="Berben G."/>
            <person name="Bergantino E."/>
            <person name="Biteau N."/>
            <person name="Bolle P.-A."/>
            <person name="Bolotin-Fukuhara M."/>
            <person name="Brown A."/>
            <person name="Brown A.J.P."/>
            <person name="Buhler J.-M."/>
            <person name="Carcano C."/>
            <person name="Carignani G."/>
            <person name="Cederberg H."/>
            <person name="Chanet R."/>
            <person name="Contreras R."/>
            <person name="Crouzet M."/>
            <person name="Daignan-Fornier B."/>
            <person name="Defoor E."/>
            <person name="Delgado M.D."/>
            <person name="Demolder J."/>
            <person name="Doira C."/>
            <person name="Dubois E."/>
            <person name="Dujon B."/>
            <person name="Duesterhoeft A."/>
            <person name="Erdmann D."/>
            <person name="Esteban M."/>
            <person name="Fabre F."/>
            <person name="Fairhead C."/>
            <person name="Faye G."/>
            <person name="Feldmann H."/>
            <person name="Fiers W."/>
            <person name="Francingues-Gaillard M.-C."/>
            <person name="Franco L."/>
            <person name="Frontali L."/>
            <person name="Fukuhara H."/>
            <person name="Fuller L.J."/>
            <person name="Galland P."/>
            <person name="Gent M.E."/>
            <person name="Gigot D."/>
            <person name="Gilliquet V."/>
            <person name="Glansdorff N."/>
            <person name="Goffeau A."/>
            <person name="Grenson M."/>
            <person name="Grisanti P."/>
            <person name="Grivell L.A."/>
            <person name="de Haan M."/>
            <person name="Haasemann M."/>
            <person name="Hatat D."/>
            <person name="Hoenicka J."/>
            <person name="Hegemann J.H."/>
            <person name="Herbert C.J."/>
            <person name="Hilger F."/>
            <person name="Hohmann S."/>
            <person name="Hollenberg C.P."/>
            <person name="Huse K."/>
            <person name="Iborra F."/>
            <person name="Indge K.J."/>
            <person name="Isono K."/>
            <person name="Jacq C."/>
            <person name="Jacquet M."/>
            <person name="James C.M."/>
            <person name="Jauniaux J.-C."/>
            <person name="Jia Y."/>
            <person name="Jimenez A."/>
            <person name="Kelly A."/>
            <person name="Kleinhans U."/>
            <person name="Kreisl P."/>
            <person name="Lanfranchi G."/>
            <person name="Lewis C."/>
            <person name="van der Linden C.G."/>
            <person name="Lucchini G."/>
            <person name="Lutzenkirchen K."/>
            <person name="Maat M.J."/>
            <person name="Mallet L."/>
            <person name="Mannhaupt G."/>
            <person name="Martegani E."/>
            <person name="Mathieu A."/>
            <person name="Maurer C.T.C."/>
            <person name="McConnell D."/>
            <person name="McKee R.A."/>
            <person name="Messenguy F."/>
            <person name="Mewes H.-W."/>
            <person name="Molemans F."/>
            <person name="Montague M.A."/>
            <person name="Muzi Falconi M."/>
            <person name="Navas L."/>
            <person name="Newlon C.S."/>
            <person name="Noone D."/>
            <person name="Pallier C."/>
            <person name="Panzeri L."/>
            <person name="Pearson B.M."/>
            <person name="Perea J."/>
            <person name="Philippsen P."/>
            <person name="Pierard A."/>
            <person name="Planta R.J."/>
            <person name="Plevani P."/>
            <person name="Poetsch B."/>
            <person name="Pohl F.M."/>
            <person name="Purnelle B."/>
            <person name="Ramezani Rad M."/>
            <person name="Rasmussen S.W."/>
            <person name="Raynal A."/>
            <person name="Remacha M.A."/>
            <person name="Richterich P."/>
            <person name="Roberts A.B."/>
            <person name="Rodriguez F."/>
            <person name="Sanz E."/>
            <person name="Schaaff-Gerstenschlaeger I."/>
            <person name="Scherens B."/>
            <person name="Schweitzer B."/>
            <person name="Shu Y."/>
            <person name="Skala J."/>
            <person name="Slonimski P.P."/>
            <person name="Sor F."/>
            <person name="Soustelle C."/>
            <person name="Spiegelberg R."/>
            <person name="Stateva L.I."/>
            <person name="Steensma H.Y."/>
            <person name="Steiner S."/>
            <person name="Thierry A."/>
            <person name="Thireos G."/>
            <person name="Tzermia M."/>
            <person name="Urrestarazu L.A."/>
            <person name="Valle G."/>
            <person name="Vetter I."/>
            <person name="van Vliet-Reedijk J.C."/>
            <person name="Voet M."/>
            <person name="Volckaert G."/>
            <person name="Vreken P."/>
            <person name="Wang H."/>
            <person name="Warmington J.R."/>
            <person name="von Wettstein D."/>
            <person name="Wicksteed B.L."/>
            <person name="Wilson C."/>
            <person name="Wurst H."/>
            <person name="Xu G."/>
            <person name="Yoshikawa A."/>
            <person name="Zimmermann F.K."/>
            <person name="Sgouros J.G."/>
        </authorList>
    </citation>
    <scope>NUCLEOTIDE SEQUENCE [LARGE SCALE GENOMIC DNA]</scope>
    <source>
        <strain>ATCC 204508 / S288c</strain>
    </source>
</reference>
<reference key="2">
    <citation type="journal article" date="2014" name="G3 (Bethesda)">
        <title>The reference genome sequence of Saccharomyces cerevisiae: Then and now.</title>
        <authorList>
            <person name="Engel S.R."/>
            <person name="Dietrich F.S."/>
            <person name="Fisk D.G."/>
            <person name="Binkley G."/>
            <person name="Balakrishnan R."/>
            <person name="Costanzo M.C."/>
            <person name="Dwight S.S."/>
            <person name="Hitz B.C."/>
            <person name="Karra K."/>
            <person name="Nash R.S."/>
            <person name="Weng S."/>
            <person name="Wong E.D."/>
            <person name="Lloyd P."/>
            <person name="Skrzypek M.S."/>
            <person name="Miyasato S.R."/>
            <person name="Simison M."/>
            <person name="Cherry J.M."/>
        </authorList>
    </citation>
    <scope>GENOME REANNOTATION</scope>
    <source>
        <strain>ATCC 204508 / S288c</strain>
    </source>
</reference>
<organism>
    <name type="scientific">Saccharomyces cerevisiae (strain ATCC 204508 / S288c)</name>
    <name type="common">Baker's yeast</name>
    <dbReference type="NCBI Taxonomy" id="559292"/>
    <lineage>
        <taxon>Eukaryota</taxon>
        <taxon>Fungi</taxon>
        <taxon>Dikarya</taxon>
        <taxon>Ascomycota</taxon>
        <taxon>Saccharomycotina</taxon>
        <taxon>Saccharomycetes</taxon>
        <taxon>Saccharomycetales</taxon>
        <taxon>Saccharomycetaceae</taxon>
        <taxon>Saccharomyces</taxon>
    </lineage>
</organism>
<proteinExistence type="uncertain"/>
<gene>
    <name type="ordered locus">YCR049C</name>
    <name type="ORF">YCR49C</name>
</gene>